<organism>
    <name type="scientific">Ectopseudomonas mendocina (strain ymp)</name>
    <name type="common">Pseudomonas mendocina</name>
    <dbReference type="NCBI Taxonomy" id="399739"/>
    <lineage>
        <taxon>Bacteria</taxon>
        <taxon>Pseudomonadati</taxon>
        <taxon>Pseudomonadota</taxon>
        <taxon>Gammaproteobacteria</taxon>
        <taxon>Pseudomonadales</taxon>
        <taxon>Pseudomonadaceae</taxon>
        <taxon>Ectopseudomonas</taxon>
    </lineage>
</organism>
<feature type="chain" id="PRO_1000052801" description="Large ribosomal subunit protein uL5">
    <location>
        <begin position="1"/>
        <end position="179"/>
    </location>
</feature>
<gene>
    <name evidence="1" type="primary">rplE</name>
    <name type="ordered locus">Pmen_3897</name>
</gene>
<evidence type="ECO:0000255" key="1">
    <source>
        <dbReference type="HAMAP-Rule" id="MF_01333"/>
    </source>
</evidence>
<evidence type="ECO:0000305" key="2"/>
<keyword id="KW-0687">Ribonucleoprotein</keyword>
<keyword id="KW-0689">Ribosomal protein</keyword>
<keyword id="KW-0694">RNA-binding</keyword>
<keyword id="KW-0699">rRNA-binding</keyword>
<keyword id="KW-0820">tRNA-binding</keyword>
<accession>A4XZ78</accession>
<sequence length="179" mass="20450">MARLKEIYRKEIAPKLKEELKLANVMEVPRITKITLNMGLGEAIGDKKVIENAVADLEKITGQKVVVTHARKSIAGFKVREGWPIGVKVTLRRERMYEFLDRLLSISLPRVRDFRGLNAKSFDGRGNYSMGVKEQIIFPEIDYDKIDALRGLDITLTTTARNDDEGRALLRAFNFPFRN</sequence>
<comment type="function">
    <text evidence="1">This is one of the proteins that bind and probably mediate the attachment of the 5S RNA into the large ribosomal subunit, where it forms part of the central protuberance. In the 70S ribosome it contacts protein S13 of the 30S subunit (bridge B1b), connecting the 2 subunits; this bridge is implicated in subunit movement. Contacts the P site tRNA; the 5S rRNA and some of its associated proteins might help stabilize positioning of ribosome-bound tRNAs.</text>
</comment>
<comment type="subunit">
    <text evidence="1">Part of the 50S ribosomal subunit; part of the 5S rRNA/L5/L18/L25 subcomplex. Contacts the 5S rRNA and the P site tRNA. Forms a bridge to the 30S subunit in the 70S ribosome.</text>
</comment>
<comment type="similarity">
    <text evidence="1">Belongs to the universal ribosomal protein uL5 family.</text>
</comment>
<reference key="1">
    <citation type="submission" date="2007-04" db="EMBL/GenBank/DDBJ databases">
        <title>Complete sequence of Pseudomonas mendocina ymp.</title>
        <authorList>
            <consortium name="US DOE Joint Genome Institute"/>
            <person name="Copeland A."/>
            <person name="Lucas S."/>
            <person name="Lapidus A."/>
            <person name="Barry K."/>
            <person name="Glavina del Rio T."/>
            <person name="Dalin E."/>
            <person name="Tice H."/>
            <person name="Pitluck S."/>
            <person name="Kiss H."/>
            <person name="Brettin T."/>
            <person name="Detter J.C."/>
            <person name="Bruce D."/>
            <person name="Han C."/>
            <person name="Schmutz J."/>
            <person name="Larimer F."/>
            <person name="Land M."/>
            <person name="Hauser L."/>
            <person name="Kyrpides N."/>
            <person name="Mikhailova N."/>
            <person name="Hersman L."/>
            <person name="Dubois J."/>
            <person name="Maurice P."/>
            <person name="Richardson P."/>
        </authorList>
    </citation>
    <scope>NUCLEOTIDE SEQUENCE [LARGE SCALE GENOMIC DNA]</scope>
    <source>
        <strain>ymp</strain>
    </source>
</reference>
<name>RL5_ECTM1</name>
<dbReference type="EMBL" id="CP000680">
    <property type="protein sequence ID" value="ABP86644.1"/>
    <property type="molecule type" value="Genomic_DNA"/>
</dbReference>
<dbReference type="SMR" id="A4XZ78"/>
<dbReference type="STRING" id="399739.Pmen_3897"/>
<dbReference type="KEGG" id="pmy:Pmen_3897"/>
<dbReference type="eggNOG" id="COG0094">
    <property type="taxonomic scope" value="Bacteria"/>
</dbReference>
<dbReference type="HOGENOM" id="CLU_061015_2_1_6"/>
<dbReference type="OrthoDB" id="9806626at2"/>
<dbReference type="GO" id="GO:1990904">
    <property type="term" value="C:ribonucleoprotein complex"/>
    <property type="evidence" value="ECO:0007669"/>
    <property type="project" value="UniProtKB-KW"/>
</dbReference>
<dbReference type="GO" id="GO:0005840">
    <property type="term" value="C:ribosome"/>
    <property type="evidence" value="ECO:0007669"/>
    <property type="project" value="UniProtKB-KW"/>
</dbReference>
<dbReference type="GO" id="GO:0019843">
    <property type="term" value="F:rRNA binding"/>
    <property type="evidence" value="ECO:0007669"/>
    <property type="project" value="UniProtKB-UniRule"/>
</dbReference>
<dbReference type="GO" id="GO:0003735">
    <property type="term" value="F:structural constituent of ribosome"/>
    <property type="evidence" value="ECO:0007669"/>
    <property type="project" value="InterPro"/>
</dbReference>
<dbReference type="GO" id="GO:0000049">
    <property type="term" value="F:tRNA binding"/>
    <property type="evidence" value="ECO:0007669"/>
    <property type="project" value="UniProtKB-UniRule"/>
</dbReference>
<dbReference type="GO" id="GO:0006412">
    <property type="term" value="P:translation"/>
    <property type="evidence" value="ECO:0007669"/>
    <property type="project" value="UniProtKB-UniRule"/>
</dbReference>
<dbReference type="FunFam" id="3.30.1440.10:FF:000001">
    <property type="entry name" value="50S ribosomal protein L5"/>
    <property type="match status" value="1"/>
</dbReference>
<dbReference type="Gene3D" id="3.30.1440.10">
    <property type="match status" value="1"/>
</dbReference>
<dbReference type="HAMAP" id="MF_01333_B">
    <property type="entry name" value="Ribosomal_uL5_B"/>
    <property type="match status" value="1"/>
</dbReference>
<dbReference type="InterPro" id="IPR002132">
    <property type="entry name" value="Ribosomal_uL5"/>
</dbReference>
<dbReference type="InterPro" id="IPR020930">
    <property type="entry name" value="Ribosomal_uL5_bac-type"/>
</dbReference>
<dbReference type="InterPro" id="IPR031309">
    <property type="entry name" value="Ribosomal_uL5_C"/>
</dbReference>
<dbReference type="InterPro" id="IPR020929">
    <property type="entry name" value="Ribosomal_uL5_CS"/>
</dbReference>
<dbReference type="InterPro" id="IPR022803">
    <property type="entry name" value="Ribosomal_uL5_dom_sf"/>
</dbReference>
<dbReference type="InterPro" id="IPR031310">
    <property type="entry name" value="Ribosomal_uL5_N"/>
</dbReference>
<dbReference type="NCBIfam" id="NF000585">
    <property type="entry name" value="PRK00010.1"/>
    <property type="match status" value="1"/>
</dbReference>
<dbReference type="PANTHER" id="PTHR11994">
    <property type="entry name" value="60S RIBOSOMAL PROTEIN L11-RELATED"/>
    <property type="match status" value="1"/>
</dbReference>
<dbReference type="Pfam" id="PF00281">
    <property type="entry name" value="Ribosomal_L5"/>
    <property type="match status" value="1"/>
</dbReference>
<dbReference type="Pfam" id="PF00673">
    <property type="entry name" value="Ribosomal_L5_C"/>
    <property type="match status" value="1"/>
</dbReference>
<dbReference type="PIRSF" id="PIRSF002161">
    <property type="entry name" value="Ribosomal_L5"/>
    <property type="match status" value="1"/>
</dbReference>
<dbReference type="SUPFAM" id="SSF55282">
    <property type="entry name" value="RL5-like"/>
    <property type="match status" value="1"/>
</dbReference>
<dbReference type="PROSITE" id="PS00358">
    <property type="entry name" value="RIBOSOMAL_L5"/>
    <property type="match status" value="1"/>
</dbReference>
<protein>
    <recommendedName>
        <fullName evidence="1">Large ribosomal subunit protein uL5</fullName>
    </recommendedName>
    <alternativeName>
        <fullName evidence="2">50S ribosomal protein L5</fullName>
    </alternativeName>
</protein>
<proteinExistence type="inferred from homology"/>